<organism>
    <name type="scientific">Neurospora crassa (strain ATCC 24698 / 74-OR23-1A / CBS 708.71 / DSM 1257 / FGSC 987)</name>
    <dbReference type="NCBI Taxonomy" id="367110"/>
    <lineage>
        <taxon>Eukaryota</taxon>
        <taxon>Fungi</taxon>
        <taxon>Dikarya</taxon>
        <taxon>Ascomycota</taxon>
        <taxon>Pezizomycotina</taxon>
        <taxon>Sordariomycetes</taxon>
        <taxon>Sordariomycetidae</taxon>
        <taxon>Sordariales</taxon>
        <taxon>Sordariaceae</taxon>
        <taxon>Neurospora</taxon>
    </lineage>
</organism>
<gene>
    <name type="primary">nuo-31</name>
    <name type="ORF">NCU04074</name>
</gene>
<protein>
    <recommendedName>
        <fullName>NADH-ubiquinone oxidoreductase 30.4 kDa subunit, mitochondrial</fullName>
        <ecNumber>7.1.1.2</ecNumber>
    </recommendedName>
    <alternativeName>
        <fullName>CI-31kD</fullName>
    </alternativeName>
    <alternativeName>
        <fullName>Complex I-30kD</fullName>
    </alternativeName>
</protein>
<proteinExistence type="evidence at transcript level"/>
<keyword id="KW-0249">Electron transport</keyword>
<keyword id="KW-0472">Membrane</keyword>
<keyword id="KW-0496">Mitochondrion</keyword>
<keyword id="KW-0999">Mitochondrion inner membrane</keyword>
<keyword id="KW-0520">NAD</keyword>
<keyword id="KW-0560">Oxidoreductase</keyword>
<keyword id="KW-1185">Reference proteome</keyword>
<keyword id="KW-0679">Respiratory chain</keyword>
<keyword id="KW-0809">Transit peptide</keyword>
<keyword id="KW-1278">Translocase</keyword>
<keyword id="KW-0813">Transport</keyword>
<keyword id="KW-0830">Ubiquinone</keyword>
<dbReference type="EC" id="7.1.1.2"/>
<dbReference type="EMBL" id="CM002241">
    <property type="protein sequence ID" value="EAA28453.1"/>
    <property type="molecule type" value="Genomic_DNA"/>
</dbReference>
<dbReference type="PIR" id="A35935">
    <property type="entry name" value="A35935"/>
</dbReference>
<dbReference type="SMR" id="P23710"/>
<dbReference type="STRING" id="367110.P23710"/>
<dbReference type="TCDB" id="3.D.1.6.2">
    <property type="family name" value="the h+ or na+-translocating nadh dehydrogenase (ndh) family"/>
</dbReference>
<dbReference type="PaxDb" id="5141-EFNCRP00000003652"/>
<dbReference type="EnsemblFungi" id="EAA28453">
    <property type="protein sequence ID" value="EAA28453"/>
    <property type="gene ID" value="NCU04074"/>
</dbReference>
<dbReference type="KEGG" id="ncr:NCU04074"/>
<dbReference type="VEuPathDB" id="FungiDB:NCU04074"/>
<dbReference type="HOGENOM" id="CLU_042628_0_0_1"/>
<dbReference type="InParanoid" id="P23710"/>
<dbReference type="OMA" id="PCRKNRF"/>
<dbReference type="OrthoDB" id="37721at2759"/>
<dbReference type="Proteomes" id="UP000001805">
    <property type="component" value="Chromosome 5, Linkage Group VI"/>
</dbReference>
<dbReference type="GO" id="GO:0005743">
    <property type="term" value="C:mitochondrial inner membrane"/>
    <property type="evidence" value="ECO:0007669"/>
    <property type="project" value="UniProtKB-SubCell"/>
</dbReference>
<dbReference type="GO" id="GO:0045271">
    <property type="term" value="C:respiratory chain complex I"/>
    <property type="evidence" value="ECO:0000318"/>
    <property type="project" value="GO_Central"/>
</dbReference>
<dbReference type="GO" id="GO:0008137">
    <property type="term" value="F:NADH dehydrogenase (ubiquinone) activity"/>
    <property type="evidence" value="ECO:0007669"/>
    <property type="project" value="UniProtKB-EC"/>
</dbReference>
<dbReference type="FunFam" id="3.30.460.80:FF:000002">
    <property type="entry name" value="NADH dehydrogenase iron-sulfur protein 3, mitochondrial"/>
    <property type="match status" value="1"/>
</dbReference>
<dbReference type="Gene3D" id="3.30.460.80">
    <property type="entry name" value="NADH:ubiquinone oxidoreductase, 30kDa subunit"/>
    <property type="match status" value="1"/>
</dbReference>
<dbReference type="HAMAP" id="MF_01357">
    <property type="entry name" value="NDH1_NuoC"/>
    <property type="match status" value="1"/>
</dbReference>
<dbReference type="InterPro" id="IPR010218">
    <property type="entry name" value="NADH_DH_suC"/>
</dbReference>
<dbReference type="InterPro" id="IPR037232">
    <property type="entry name" value="NADH_quin_OxRdtase_su_C/D-like"/>
</dbReference>
<dbReference type="InterPro" id="IPR001268">
    <property type="entry name" value="NADH_UbQ_OxRdtase_30kDa_su"/>
</dbReference>
<dbReference type="InterPro" id="IPR020396">
    <property type="entry name" value="NADH_UbQ_OxRdtase_CS"/>
</dbReference>
<dbReference type="NCBIfam" id="TIGR01961">
    <property type="entry name" value="NuoC_fam"/>
    <property type="match status" value="1"/>
</dbReference>
<dbReference type="NCBIfam" id="NF004733">
    <property type="entry name" value="PRK06074.1-5"/>
    <property type="match status" value="1"/>
</dbReference>
<dbReference type="PANTHER" id="PTHR10884:SF14">
    <property type="entry name" value="NADH DEHYDROGENASE [UBIQUINONE] IRON-SULFUR PROTEIN 3, MITOCHONDRIAL"/>
    <property type="match status" value="1"/>
</dbReference>
<dbReference type="PANTHER" id="PTHR10884">
    <property type="entry name" value="NADH DEHYDROGENASE UBIQUINONE IRON-SULFUR PROTEIN 3"/>
    <property type="match status" value="1"/>
</dbReference>
<dbReference type="Pfam" id="PF00329">
    <property type="entry name" value="Complex1_30kDa"/>
    <property type="match status" value="1"/>
</dbReference>
<dbReference type="SUPFAM" id="SSF143243">
    <property type="entry name" value="Nqo5-like"/>
    <property type="match status" value="1"/>
</dbReference>
<dbReference type="PROSITE" id="PS00542">
    <property type="entry name" value="COMPLEX1_30K"/>
    <property type="match status" value="1"/>
</dbReference>
<name>NDUS3_NEUCR</name>
<accession>P23710</accession>
<accession>Q7RV79</accession>
<feature type="transit peptide" description="Mitochondrion" evidence="1">
    <location>
        <begin position="1"/>
        <end position="17"/>
    </location>
</feature>
<feature type="chain" id="PRO_0000020000" description="NADH-ubiquinone oxidoreductase 30.4 kDa subunit, mitochondrial">
    <location>
        <begin position="18"/>
        <end position="283"/>
    </location>
</feature>
<feature type="region of interest" description="Disordered" evidence="2">
    <location>
        <begin position="258"/>
        <end position="283"/>
    </location>
</feature>
<feature type="sequence conflict" description="In Ref. 1." evidence="3" ref="1">
    <original>G</original>
    <variation>R</variation>
    <location>
        <position position="40"/>
    </location>
</feature>
<evidence type="ECO:0000255" key="1"/>
<evidence type="ECO:0000256" key="2">
    <source>
        <dbReference type="SAM" id="MobiDB-lite"/>
    </source>
</evidence>
<evidence type="ECO:0000305" key="3"/>
<reference key="1">
    <citation type="journal article" date="1990" name="Biochem. Biophys. Res. Commun.">
        <title>Primary structure and expression of a nuclear-coded subunit of complex I homologous to proteins specified by the chloroplast genome.</title>
        <authorList>
            <person name="Videira A."/>
            <person name="Tropschug M."/>
            <person name="Werner S."/>
        </authorList>
    </citation>
    <scope>NUCLEOTIDE SEQUENCE [MRNA]</scope>
</reference>
<reference key="2">
    <citation type="journal article" date="2003" name="Nature">
        <title>The genome sequence of the filamentous fungus Neurospora crassa.</title>
        <authorList>
            <person name="Galagan J.E."/>
            <person name="Calvo S.E."/>
            <person name="Borkovich K.A."/>
            <person name="Selker E.U."/>
            <person name="Read N.D."/>
            <person name="Jaffe D.B."/>
            <person name="FitzHugh W."/>
            <person name="Ma L.-J."/>
            <person name="Smirnov S."/>
            <person name="Purcell S."/>
            <person name="Rehman B."/>
            <person name="Elkins T."/>
            <person name="Engels R."/>
            <person name="Wang S."/>
            <person name="Nielsen C.B."/>
            <person name="Butler J."/>
            <person name="Endrizzi M."/>
            <person name="Qui D."/>
            <person name="Ianakiev P."/>
            <person name="Bell-Pedersen D."/>
            <person name="Nelson M.A."/>
            <person name="Werner-Washburne M."/>
            <person name="Selitrennikoff C.P."/>
            <person name="Kinsey J.A."/>
            <person name="Braun E.L."/>
            <person name="Zelter A."/>
            <person name="Schulte U."/>
            <person name="Kothe G.O."/>
            <person name="Jedd G."/>
            <person name="Mewes H.-W."/>
            <person name="Staben C."/>
            <person name="Marcotte E."/>
            <person name="Greenberg D."/>
            <person name="Roy A."/>
            <person name="Foley K."/>
            <person name="Naylor J."/>
            <person name="Stange-Thomann N."/>
            <person name="Barrett R."/>
            <person name="Gnerre S."/>
            <person name="Kamal M."/>
            <person name="Kamvysselis M."/>
            <person name="Mauceli E.W."/>
            <person name="Bielke C."/>
            <person name="Rudd S."/>
            <person name="Frishman D."/>
            <person name="Krystofova S."/>
            <person name="Rasmussen C."/>
            <person name="Metzenberg R.L."/>
            <person name="Perkins D.D."/>
            <person name="Kroken S."/>
            <person name="Cogoni C."/>
            <person name="Macino G."/>
            <person name="Catcheside D.E.A."/>
            <person name="Li W."/>
            <person name="Pratt R.J."/>
            <person name="Osmani S.A."/>
            <person name="DeSouza C.P.C."/>
            <person name="Glass N.L."/>
            <person name="Orbach M.J."/>
            <person name="Berglund J.A."/>
            <person name="Voelker R."/>
            <person name="Yarden O."/>
            <person name="Plamann M."/>
            <person name="Seiler S."/>
            <person name="Dunlap J.C."/>
            <person name="Radford A."/>
            <person name="Aramayo R."/>
            <person name="Natvig D.O."/>
            <person name="Alex L.A."/>
            <person name="Mannhaupt G."/>
            <person name="Ebbole D.J."/>
            <person name="Freitag M."/>
            <person name="Paulsen I."/>
            <person name="Sachs M.S."/>
            <person name="Lander E.S."/>
            <person name="Nusbaum C."/>
            <person name="Birren B.W."/>
        </authorList>
    </citation>
    <scope>NUCLEOTIDE SEQUENCE [LARGE SCALE GENOMIC DNA]</scope>
    <source>
        <strain>ATCC 24698 / 74-OR23-1A / CBS 708.71 / DSM 1257 / FGSC 987</strain>
    </source>
</reference>
<sequence>MASKLCRSRALASALRSAKPSPAIRCLATTSRNLINMPEGPNPRQFPREPLPGALNAAVVNPADKYQSKADNLHKYGSWLMGCLPKYIQQFSVWKDELTIYISPAGVIPVFSFLKYNTAAEYTQVSDITAVDFPTKDQRFEVVYNLLSVRHNSRIRVKTYADEVSPVPSITPLYDGANWYEREVYDLFGVFFTGHPDLRRIMTDYGFDGHPLRKDFPMTGYTEIRYDEEKKRIVTEPLEMTQAFRNFEGGSSAWEQVGAGIDRKPESFKLPTPKPETKPEEKK</sequence>
<comment type="function">
    <text>Core subunit of the mitochondrial membrane respiratory chain NADH dehydrogenase (Complex I) that is believed to belong to the minimal assembly required for catalysis. Complex I functions in the transfer of electrons from NADH to the respiratory chain. The immediate electron acceptor for the enzyme is believed to be ubiquinone.</text>
</comment>
<comment type="catalytic activity">
    <reaction>
        <text>a ubiquinone + NADH + 5 H(+)(in) = a ubiquinol + NAD(+) + 4 H(+)(out)</text>
        <dbReference type="Rhea" id="RHEA:29091"/>
        <dbReference type="Rhea" id="RHEA-COMP:9565"/>
        <dbReference type="Rhea" id="RHEA-COMP:9566"/>
        <dbReference type="ChEBI" id="CHEBI:15378"/>
        <dbReference type="ChEBI" id="CHEBI:16389"/>
        <dbReference type="ChEBI" id="CHEBI:17976"/>
        <dbReference type="ChEBI" id="CHEBI:57540"/>
        <dbReference type="ChEBI" id="CHEBI:57945"/>
        <dbReference type="EC" id="7.1.1.2"/>
    </reaction>
</comment>
<comment type="subunit">
    <text>Complex I is composed of about 40 different subunits. This is a component of the iron-sulfur protein fraction.</text>
</comment>
<comment type="subcellular location">
    <subcellularLocation>
        <location>Mitochondrion inner membrane</location>
    </subcellularLocation>
</comment>
<comment type="similarity">
    <text evidence="3">Belongs to the complex I 30 kDa subunit family.</text>
</comment>